<proteinExistence type="inferred from homology"/>
<protein>
    <recommendedName>
        <fullName evidence="1">Small ribosomal subunit protein bS6</fullName>
    </recommendedName>
    <alternativeName>
        <fullName evidence="3">30S ribosomal protein S6</fullName>
    </alternativeName>
</protein>
<accession>Q8EAH2</accession>
<name>RS6_SHEON</name>
<reference key="1">
    <citation type="journal article" date="2002" name="Nat. Biotechnol.">
        <title>Genome sequence of the dissimilatory metal ion-reducing bacterium Shewanella oneidensis.</title>
        <authorList>
            <person name="Heidelberg J.F."/>
            <person name="Paulsen I.T."/>
            <person name="Nelson K.E."/>
            <person name="Gaidos E.J."/>
            <person name="Nelson W.C."/>
            <person name="Read T.D."/>
            <person name="Eisen J.A."/>
            <person name="Seshadri R."/>
            <person name="Ward N.L."/>
            <person name="Methe B.A."/>
            <person name="Clayton R.A."/>
            <person name="Meyer T."/>
            <person name="Tsapin A."/>
            <person name="Scott J."/>
            <person name="Beanan M.J."/>
            <person name="Brinkac L.M."/>
            <person name="Daugherty S.C."/>
            <person name="DeBoy R.T."/>
            <person name="Dodson R.J."/>
            <person name="Durkin A.S."/>
            <person name="Haft D.H."/>
            <person name="Kolonay J.F."/>
            <person name="Madupu R."/>
            <person name="Peterson J.D."/>
            <person name="Umayam L.A."/>
            <person name="White O."/>
            <person name="Wolf A.M."/>
            <person name="Vamathevan J.J."/>
            <person name="Weidman J.F."/>
            <person name="Impraim M."/>
            <person name="Lee K."/>
            <person name="Berry K.J."/>
            <person name="Lee C."/>
            <person name="Mueller J."/>
            <person name="Khouri H.M."/>
            <person name="Gill J."/>
            <person name="Utterback T.R."/>
            <person name="McDonald L.A."/>
            <person name="Feldblyum T.V."/>
            <person name="Smith H.O."/>
            <person name="Venter J.C."/>
            <person name="Nealson K.H."/>
            <person name="Fraser C.M."/>
        </authorList>
    </citation>
    <scope>NUCLEOTIDE SEQUENCE [LARGE SCALE GENOMIC DNA]</scope>
    <source>
        <strain>ATCC 700550 / JCM 31522 / CIP 106686 / LMG 19005 / NCIMB 14063 / MR-1</strain>
    </source>
</reference>
<dbReference type="EMBL" id="AE014299">
    <property type="protein sequence ID" value="AAN56905.1"/>
    <property type="molecule type" value="Genomic_DNA"/>
</dbReference>
<dbReference type="RefSeq" id="NP_719461.1">
    <property type="nucleotide sequence ID" value="NC_004347.2"/>
</dbReference>
<dbReference type="RefSeq" id="WP_011073674.1">
    <property type="nucleotide sequence ID" value="NZ_CP053946.1"/>
</dbReference>
<dbReference type="SMR" id="Q8EAH2"/>
<dbReference type="STRING" id="211586.SO_3930"/>
<dbReference type="PaxDb" id="211586-SO_3930"/>
<dbReference type="KEGG" id="son:SO_3930"/>
<dbReference type="PATRIC" id="fig|211586.12.peg.3814"/>
<dbReference type="eggNOG" id="COG0360">
    <property type="taxonomic scope" value="Bacteria"/>
</dbReference>
<dbReference type="HOGENOM" id="CLU_113441_6_1_6"/>
<dbReference type="OrthoDB" id="9812702at2"/>
<dbReference type="PhylomeDB" id="Q8EAH2"/>
<dbReference type="BioCyc" id="SONE211586:G1GMP-3648-MONOMER"/>
<dbReference type="Proteomes" id="UP000008186">
    <property type="component" value="Chromosome"/>
</dbReference>
<dbReference type="GO" id="GO:0022627">
    <property type="term" value="C:cytosolic small ribosomal subunit"/>
    <property type="evidence" value="ECO:0000318"/>
    <property type="project" value="GO_Central"/>
</dbReference>
<dbReference type="GO" id="GO:0070181">
    <property type="term" value="F:small ribosomal subunit rRNA binding"/>
    <property type="evidence" value="ECO:0000318"/>
    <property type="project" value="GO_Central"/>
</dbReference>
<dbReference type="GO" id="GO:0003735">
    <property type="term" value="F:structural constituent of ribosome"/>
    <property type="evidence" value="ECO:0000318"/>
    <property type="project" value="GO_Central"/>
</dbReference>
<dbReference type="GO" id="GO:0006412">
    <property type="term" value="P:translation"/>
    <property type="evidence" value="ECO:0007669"/>
    <property type="project" value="UniProtKB-UniRule"/>
</dbReference>
<dbReference type="CDD" id="cd00473">
    <property type="entry name" value="bS6"/>
    <property type="match status" value="1"/>
</dbReference>
<dbReference type="FunFam" id="3.30.70.60:FF:000003">
    <property type="entry name" value="30S ribosomal protein S6"/>
    <property type="match status" value="1"/>
</dbReference>
<dbReference type="Gene3D" id="3.30.70.60">
    <property type="match status" value="1"/>
</dbReference>
<dbReference type="HAMAP" id="MF_00360">
    <property type="entry name" value="Ribosomal_bS6"/>
    <property type="match status" value="1"/>
</dbReference>
<dbReference type="InterPro" id="IPR000529">
    <property type="entry name" value="Ribosomal_bS6"/>
</dbReference>
<dbReference type="InterPro" id="IPR035980">
    <property type="entry name" value="Ribosomal_bS6_sf"/>
</dbReference>
<dbReference type="InterPro" id="IPR020814">
    <property type="entry name" value="Ribosomal_S6_plastid/chlpt"/>
</dbReference>
<dbReference type="InterPro" id="IPR014717">
    <property type="entry name" value="Transl_elong_EF1B/ribsomal_bS6"/>
</dbReference>
<dbReference type="NCBIfam" id="TIGR00166">
    <property type="entry name" value="S6"/>
    <property type="match status" value="1"/>
</dbReference>
<dbReference type="PANTHER" id="PTHR21011">
    <property type="entry name" value="MITOCHONDRIAL 28S RIBOSOMAL PROTEIN S6"/>
    <property type="match status" value="1"/>
</dbReference>
<dbReference type="PANTHER" id="PTHR21011:SF1">
    <property type="entry name" value="SMALL RIBOSOMAL SUBUNIT PROTEIN BS6M"/>
    <property type="match status" value="1"/>
</dbReference>
<dbReference type="Pfam" id="PF01250">
    <property type="entry name" value="Ribosomal_S6"/>
    <property type="match status" value="1"/>
</dbReference>
<dbReference type="SUPFAM" id="SSF54995">
    <property type="entry name" value="Ribosomal protein S6"/>
    <property type="match status" value="1"/>
</dbReference>
<feature type="chain" id="PRO_0000176833" description="Small ribosomal subunit protein bS6">
    <location>
        <begin position="1"/>
        <end position="131"/>
    </location>
</feature>
<feature type="region of interest" description="Disordered" evidence="2">
    <location>
        <begin position="96"/>
        <end position="131"/>
    </location>
</feature>
<feature type="compositionally biased region" description="Basic and acidic residues" evidence="2">
    <location>
        <begin position="104"/>
        <end position="122"/>
    </location>
</feature>
<evidence type="ECO:0000255" key="1">
    <source>
        <dbReference type="HAMAP-Rule" id="MF_00360"/>
    </source>
</evidence>
<evidence type="ECO:0000256" key="2">
    <source>
        <dbReference type="SAM" id="MobiDB-lite"/>
    </source>
</evidence>
<evidence type="ECO:0000305" key="3"/>
<organism>
    <name type="scientific">Shewanella oneidensis (strain ATCC 700550 / JCM 31522 / CIP 106686 / LMG 19005 / NCIMB 14063 / MR-1)</name>
    <dbReference type="NCBI Taxonomy" id="211586"/>
    <lineage>
        <taxon>Bacteria</taxon>
        <taxon>Pseudomonadati</taxon>
        <taxon>Pseudomonadota</taxon>
        <taxon>Gammaproteobacteria</taxon>
        <taxon>Alteromonadales</taxon>
        <taxon>Shewanellaceae</taxon>
        <taxon>Shewanella</taxon>
    </lineage>
</organism>
<sequence length="131" mass="15003">MRHYEIVFMVHPDQSEQVPGMIERYTGAITEANGKIHRLEDWGRRQLAYPIQDLHKAHYVLMNVEAPAETIEELETAFRFNDAVLRNMVMRTKGAITEASPMAKAKDERDSRRGPAGDRSYDEANAEEIAE</sequence>
<comment type="function">
    <text evidence="1">Binds together with bS18 to 16S ribosomal RNA.</text>
</comment>
<comment type="similarity">
    <text evidence="1">Belongs to the bacterial ribosomal protein bS6 family.</text>
</comment>
<gene>
    <name evidence="1" type="primary">rpsF</name>
    <name type="ordered locus">SO_3930</name>
</gene>
<keyword id="KW-1185">Reference proteome</keyword>
<keyword id="KW-0687">Ribonucleoprotein</keyword>
<keyword id="KW-0689">Ribosomal protein</keyword>
<keyword id="KW-0694">RNA-binding</keyword>
<keyword id="KW-0699">rRNA-binding</keyword>